<proteinExistence type="inferred from homology"/>
<feature type="chain" id="PRO_0000139885" description="Ribonuclease PH">
    <location>
        <begin position="1"/>
        <end position="245"/>
    </location>
</feature>
<feature type="binding site" evidence="1">
    <location>
        <position position="93"/>
    </location>
    <ligand>
        <name>phosphate</name>
        <dbReference type="ChEBI" id="CHEBI:43474"/>
        <note>substrate</note>
    </ligand>
</feature>
<feature type="binding site" evidence="1">
    <location>
        <begin position="131"/>
        <end position="133"/>
    </location>
    <ligand>
        <name>phosphate</name>
        <dbReference type="ChEBI" id="CHEBI:43474"/>
        <note>substrate</note>
    </ligand>
</feature>
<gene>
    <name evidence="1" type="primary">rph</name>
    <name type="ordered locus">Cgl2501</name>
    <name type="ordered locus">cg2753</name>
</gene>
<sequence>MTSSSSFSRFDGRAQDQMRAVKITRGFTSNPAGSVLVEFGNTRVMCTASVELGVPRFKRDSGEGWLTAEYAMLPAATAERNRRESMAGKVKGRTHEISRLIGRSLRAAVDLSQLGENTIAIDCDVLQADGGTRTASITGAYVALADAIKVLQERGVVPGSPLLAPVAAVSVGLVDGNVCLDLPYEEDSRADVDLNVVMTEHGEFVEIQGTGEETTFTRAQLNDMLDHAEKGCRELVAAQKAALGI</sequence>
<evidence type="ECO:0000255" key="1">
    <source>
        <dbReference type="HAMAP-Rule" id="MF_00564"/>
    </source>
</evidence>
<keyword id="KW-0548">Nucleotidyltransferase</keyword>
<keyword id="KW-1185">Reference proteome</keyword>
<keyword id="KW-0694">RNA-binding</keyword>
<keyword id="KW-0698">rRNA processing</keyword>
<keyword id="KW-0808">Transferase</keyword>
<keyword id="KW-0819">tRNA processing</keyword>
<keyword id="KW-0820">tRNA-binding</keyword>
<organism>
    <name type="scientific">Corynebacterium glutamicum (strain ATCC 13032 / DSM 20300 / JCM 1318 / BCRC 11384 / CCUG 27702 / LMG 3730 / NBRC 12168 / NCIMB 10025 / NRRL B-2784 / 534)</name>
    <dbReference type="NCBI Taxonomy" id="196627"/>
    <lineage>
        <taxon>Bacteria</taxon>
        <taxon>Bacillati</taxon>
        <taxon>Actinomycetota</taxon>
        <taxon>Actinomycetes</taxon>
        <taxon>Mycobacteriales</taxon>
        <taxon>Corynebacteriaceae</taxon>
        <taxon>Corynebacterium</taxon>
    </lineage>
</organism>
<accession>Q8NMR4</accession>
<name>RNPH_CORGL</name>
<dbReference type="EC" id="2.7.7.56" evidence="1"/>
<dbReference type="EMBL" id="BA000036">
    <property type="protein sequence ID" value="BAB99894.1"/>
    <property type="molecule type" value="Genomic_DNA"/>
</dbReference>
<dbReference type="EMBL" id="BX927155">
    <property type="protein sequence ID" value="CAF21164.1"/>
    <property type="molecule type" value="Genomic_DNA"/>
</dbReference>
<dbReference type="RefSeq" id="NP_601703.2">
    <property type="nucleotide sequence ID" value="NC_003450.3"/>
</dbReference>
<dbReference type="RefSeq" id="WP_003857993.1">
    <property type="nucleotide sequence ID" value="NC_006958.1"/>
</dbReference>
<dbReference type="SMR" id="Q8NMR4"/>
<dbReference type="STRING" id="196627.cg2753"/>
<dbReference type="GeneID" id="1020448"/>
<dbReference type="KEGG" id="cgb:cg2753"/>
<dbReference type="KEGG" id="cgl:Cgl2501"/>
<dbReference type="PATRIC" id="fig|196627.13.peg.2434"/>
<dbReference type="eggNOG" id="COG0689">
    <property type="taxonomic scope" value="Bacteria"/>
</dbReference>
<dbReference type="HOGENOM" id="CLU_050858_0_0_11"/>
<dbReference type="OrthoDB" id="9802265at2"/>
<dbReference type="BioCyc" id="CORYNE:G18NG-12105-MONOMER"/>
<dbReference type="Proteomes" id="UP000000582">
    <property type="component" value="Chromosome"/>
</dbReference>
<dbReference type="Proteomes" id="UP000001009">
    <property type="component" value="Chromosome"/>
</dbReference>
<dbReference type="GO" id="GO:0000175">
    <property type="term" value="F:3'-5'-RNA exonuclease activity"/>
    <property type="evidence" value="ECO:0007669"/>
    <property type="project" value="UniProtKB-UniRule"/>
</dbReference>
<dbReference type="GO" id="GO:0000049">
    <property type="term" value="F:tRNA binding"/>
    <property type="evidence" value="ECO:0007669"/>
    <property type="project" value="UniProtKB-UniRule"/>
</dbReference>
<dbReference type="GO" id="GO:0009022">
    <property type="term" value="F:tRNA nucleotidyltransferase activity"/>
    <property type="evidence" value="ECO:0007669"/>
    <property type="project" value="UniProtKB-UniRule"/>
</dbReference>
<dbReference type="GO" id="GO:0016075">
    <property type="term" value="P:rRNA catabolic process"/>
    <property type="evidence" value="ECO:0007669"/>
    <property type="project" value="UniProtKB-UniRule"/>
</dbReference>
<dbReference type="GO" id="GO:0006364">
    <property type="term" value="P:rRNA processing"/>
    <property type="evidence" value="ECO:0007669"/>
    <property type="project" value="UniProtKB-KW"/>
</dbReference>
<dbReference type="GO" id="GO:0008033">
    <property type="term" value="P:tRNA processing"/>
    <property type="evidence" value="ECO:0007669"/>
    <property type="project" value="UniProtKB-UniRule"/>
</dbReference>
<dbReference type="CDD" id="cd11362">
    <property type="entry name" value="RNase_PH_bact"/>
    <property type="match status" value="1"/>
</dbReference>
<dbReference type="FunFam" id="3.30.230.70:FF:000003">
    <property type="entry name" value="Ribonuclease PH"/>
    <property type="match status" value="1"/>
</dbReference>
<dbReference type="Gene3D" id="3.30.230.70">
    <property type="entry name" value="GHMP Kinase, N-terminal domain"/>
    <property type="match status" value="1"/>
</dbReference>
<dbReference type="HAMAP" id="MF_00564">
    <property type="entry name" value="RNase_PH"/>
    <property type="match status" value="1"/>
</dbReference>
<dbReference type="InterPro" id="IPR001247">
    <property type="entry name" value="ExoRNase_PH_dom1"/>
</dbReference>
<dbReference type="InterPro" id="IPR015847">
    <property type="entry name" value="ExoRNase_PH_dom2"/>
</dbReference>
<dbReference type="InterPro" id="IPR036345">
    <property type="entry name" value="ExoRNase_PH_dom2_sf"/>
</dbReference>
<dbReference type="InterPro" id="IPR027408">
    <property type="entry name" value="PNPase/RNase_PH_dom_sf"/>
</dbReference>
<dbReference type="InterPro" id="IPR020568">
    <property type="entry name" value="Ribosomal_Su5_D2-typ_SF"/>
</dbReference>
<dbReference type="InterPro" id="IPR050080">
    <property type="entry name" value="RNase_PH"/>
</dbReference>
<dbReference type="InterPro" id="IPR002381">
    <property type="entry name" value="RNase_PH_bac-type"/>
</dbReference>
<dbReference type="InterPro" id="IPR018336">
    <property type="entry name" value="RNase_PH_CS"/>
</dbReference>
<dbReference type="NCBIfam" id="TIGR01966">
    <property type="entry name" value="RNasePH"/>
    <property type="match status" value="1"/>
</dbReference>
<dbReference type="PANTHER" id="PTHR11953">
    <property type="entry name" value="EXOSOME COMPLEX COMPONENT"/>
    <property type="match status" value="1"/>
</dbReference>
<dbReference type="PANTHER" id="PTHR11953:SF0">
    <property type="entry name" value="EXOSOME COMPLEX COMPONENT RRP41"/>
    <property type="match status" value="1"/>
</dbReference>
<dbReference type="Pfam" id="PF01138">
    <property type="entry name" value="RNase_PH"/>
    <property type="match status" value="1"/>
</dbReference>
<dbReference type="Pfam" id="PF03725">
    <property type="entry name" value="RNase_PH_C"/>
    <property type="match status" value="1"/>
</dbReference>
<dbReference type="SUPFAM" id="SSF55666">
    <property type="entry name" value="Ribonuclease PH domain 2-like"/>
    <property type="match status" value="1"/>
</dbReference>
<dbReference type="SUPFAM" id="SSF54211">
    <property type="entry name" value="Ribosomal protein S5 domain 2-like"/>
    <property type="match status" value="1"/>
</dbReference>
<dbReference type="PROSITE" id="PS01277">
    <property type="entry name" value="RIBONUCLEASE_PH"/>
    <property type="match status" value="1"/>
</dbReference>
<protein>
    <recommendedName>
        <fullName evidence="1">Ribonuclease PH</fullName>
        <shortName evidence="1">RNase PH</shortName>
        <ecNumber evidence="1">2.7.7.56</ecNumber>
    </recommendedName>
    <alternativeName>
        <fullName evidence="1">tRNA nucleotidyltransferase</fullName>
    </alternativeName>
</protein>
<reference key="1">
    <citation type="journal article" date="2003" name="Appl. Microbiol. Biotechnol.">
        <title>The Corynebacterium glutamicum genome: features and impacts on biotechnological processes.</title>
        <authorList>
            <person name="Ikeda M."/>
            <person name="Nakagawa S."/>
        </authorList>
    </citation>
    <scope>NUCLEOTIDE SEQUENCE [LARGE SCALE GENOMIC DNA]</scope>
    <source>
        <strain>ATCC 13032 / DSM 20300 / JCM 1318 / BCRC 11384 / CCUG 27702 / LMG 3730 / NBRC 12168 / NCIMB 10025 / NRRL B-2784 / 534</strain>
    </source>
</reference>
<reference key="2">
    <citation type="journal article" date="2003" name="J. Biotechnol.">
        <title>The complete Corynebacterium glutamicum ATCC 13032 genome sequence and its impact on the production of L-aspartate-derived amino acids and vitamins.</title>
        <authorList>
            <person name="Kalinowski J."/>
            <person name="Bathe B."/>
            <person name="Bartels D."/>
            <person name="Bischoff N."/>
            <person name="Bott M."/>
            <person name="Burkovski A."/>
            <person name="Dusch N."/>
            <person name="Eggeling L."/>
            <person name="Eikmanns B.J."/>
            <person name="Gaigalat L."/>
            <person name="Goesmann A."/>
            <person name="Hartmann M."/>
            <person name="Huthmacher K."/>
            <person name="Kraemer R."/>
            <person name="Linke B."/>
            <person name="McHardy A.C."/>
            <person name="Meyer F."/>
            <person name="Moeckel B."/>
            <person name="Pfefferle W."/>
            <person name="Puehler A."/>
            <person name="Rey D.A."/>
            <person name="Rueckert C."/>
            <person name="Rupp O."/>
            <person name="Sahm H."/>
            <person name="Wendisch V.F."/>
            <person name="Wiegraebe I."/>
            <person name="Tauch A."/>
        </authorList>
    </citation>
    <scope>NUCLEOTIDE SEQUENCE [LARGE SCALE GENOMIC DNA]</scope>
    <source>
        <strain>ATCC 13032 / DSM 20300 / JCM 1318 / BCRC 11384 / CCUG 27702 / LMG 3730 / NBRC 12168 / NCIMB 10025 / NRRL B-2784 / 534</strain>
    </source>
</reference>
<comment type="function">
    <text evidence="1">Phosphorolytic 3'-5' exoribonuclease that plays an important role in tRNA 3'-end maturation. Removes nucleotide residues following the 3'-CCA terminus of tRNAs; can also add nucleotides to the ends of RNA molecules by using nucleoside diphosphates as substrates, but this may not be physiologically important. Probably plays a role in initiation of 16S rRNA degradation (leading to ribosome degradation) during starvation.</text>
</comment>
<comment type="catalytic activity">
    <reaction evidence="1">
        <text>tRNA(n+1) + phosphate = tRNA(n) + a ribonucleoside 5'-diphosphate</text>
        <dbReference type="Rhea" id="RHEA:10628"/>
        <dbReference type="Rhea" id="RHEA-COMP:17343"/>
        <dbReference type="Rhea" id="RHEA-COMP:17344"/>
        <dbReference type="ChEBI" id="CHEBI:43474"/>
        <dbReference type="ChEBI" id="CHEBI:57930"/>
        <dbReference type="ChEBI" id="CHEBI:173114"/>
        <dbReference type="EC" id="2.7.7.56"/>
    </reaction>
</comment>
<comment type="subunit">
    <text evidence="1">Homohexameric ring arranged as a trimer of dimers.</text>
</comment>
<comment type="similarity">
    <text evidence="1">Belongs to the RNase PH family.</text>
</comment>